<protein>
    <recommendedName>
        <fullName evidence="1">Putative membrane protein insertion efficiency factor</fullName>
    </recommendedName>
</protein>
<organism>
    <name type="scientific">Burkholderia pseudomallei (strain 1106a)</name>
    <dbReference type="NCBI Taxonomy" id="357348"/>
    <lineage>
        <taxon>Bacteria</taxon>
        <taxon>Pseudomonadati</taxon>
        <taxon>Pseudomonadota</taxon>
        <taxon>Betaproteobacteria</taxon>
        <taxon>Burkholderiales</taxon>
        <taxon>Burkholderiaceae</taxon>
        <taxon>Burkholderia</taxon>
        <taxon>pseudomallei group</taxon>
    </lineage>
</organism>
<sequence>MQTVLIALLRFYKLAVSPLLGSRCRFYPSCSDYAREAIQYHGAARGTYLAARRLCRCHPFSAGGVDLVPPPNSDARNAPHEAEASSHRL</sequence>
<proteinExistence type="inferred from homology"/>
<name>YIDD_BURP0</name>
<evidence type="ECO:0000255" key="1">
    <source>
        <dbReference type="HAMAP-Rule" id="MF_00386"/>
    </source>
</evidence>
<evidence type="ECO:0000256" key="2">
    <source>
        <dbReference type="SAM" id="MobiDB-lite"/>
    </source>
</evidence>
<accession>A3NPX0</accession>
<keyword id="KW-0997">Cell inner membrane</keyword>
<keyword id="KW-1003">Cell membrane</keyword>
<keyword id="KW-0472">Membrane</keyword>
<comment type="function">
    <text evidence="1">Could be involved in insertion of integral membrane proteins into the membrane.</text>
</comment>
<comment type="subcellular location">
    <subcellularLocation>
        <location evidence="1">Cell inner membrane</location>
        <topology evidence="1">Peripheral membrane protein</topology>
        <orientation evidence="1">Cytoplasmic side</orientation>
    </subcellularLocation>
</comment>
<comment type="similarity">
    <text evidence="1">Belongs to the UPF0161 family.</text>
</comment>
<reference key="1">
    <citation type="journal article" date="2010" name="Genome Biol. Evol.">
        <title>Continuing evolution of Burkholderia mallei through genome reduction and large-scale rearrangements.</title>
        <authorList>
            <person name="Losada L."/>
            <person name="Ronning C.M."/>
            <person name="DeShazer D."/>
            <person name="Woods D."/>
            <person name="Fedorova N."/>
            <person name="Kim H.S."/>
            <person name="Shabalina S.A."/>
            <person name="Pearson T.R."/>
            <person name="Brinkac L."/>
            <person name="Tan P."/>
            <person name="Nandi T."/>
            <person name="Crabtree J."/>
            <person name="Badger J."/>
            <person name="Beckstrom-Sternberg S."/>
            <person name="Saqib M."/>
            <person name="Schutzer S.E."/>
            <person name="Keim P."/>
            <person name="Nierman W.C."/>
        </authorList>
    </citation>
    <scope>NUCLEOTIDE SEQUENCE [LARGE SCALE GENOMIC DNA]</scope>
    <source>
        <strain>1106a</strain>
    </source>
</reference>
<dbReference type="EMBL" id="CP000572">
    <property type="protein sequence ID" value="ABN90113.1"/>
    <property type="molecule type" value="Genomic_DNA"/>
</dbReference>
<dbReference type="KEGG" id="bpl:BURPS1106A_0106"/>
<dbReference type="HOGENOM" id="CLU_144811_2_2_4"/>
<dbReference type="Proteomes" id="UP000006738">
    <property type="component" value="Chromosome I"/>
</dbReference>
<dbReference type="GO" id="GO:0005886">
    <property type="term" value="C:plasma membrane"/>
    <property type="evidence" value="ECO:0007669"/>
    <property type="project" value="UniProtKB-SubCell"/>
</dbReference>
<dbReference type="HAMAP" id="MF_00386">
    <property type="entry name" value="UPF0161_YidD"/>
    <property type="match status" value="1"/>
</dbReference>
<dbReference type="InterPro" id="IPR002696">
    <property type="entry name" value="Membr_insert_effic_factor_YidD"/>
</dbReference>
<dbReference type="NCBIfam" id="TIGR00278">
    <property type="entry name" value="membrane protein insertion efficiency factor YidD"/>
    <property type="match status" value="1"/>
</dbReference>
<dbReference type="PANTHER" id="PTHR33383">
    <property type="entry name" value="MEMBRANE PROTEIN INSERTION EFFICIENCY FACTOR-RELATED"/>
    <property type="match status" value="1"/>
</dbReference>
<dbReference type="PANTHER" id="PTHR33383:SF1">
    <property type="entry name" value="MEMBRANE PROTEIN INSERTION EFFICIENCY FACTOR-RELATED"/>
    <property type="match status" value="1"/>
</dbReference>
<dbReference type="Pfam" id="PF01809">
    <property type="entry name" value="YidD"/>
    <property type="match status" value="1"/>
</dbReference>
<dbReference type="SMART" id="SM01234">
    <property type="entry name" value="Haemolytic"/>
    <property type="match status" value="1"/>
</dbReference>
<gene>
    <name type="ordered locus">BURPS1106A_0106</name>
</gene>
<feature type="chain" id="PRO_1000013073" description="Putative membrane protein insertion efficiency factor">
    <location>
        <begin position="1"/>
        <end position="89"/>
    </location>
</feature>
<feature type="region of interest" description="Disordered" evidence="2">
    <location>
        <begin position="68"/>
        <end position="89"/>
    </location>
</feature>
<feature type="compositionally biased region" description="Basic and acidic residues" evidence="2">
    <location>
        <begin position="77"/>
        <end position="89"/>
    </location>
</feature>